<sequence>AFAGILADADITAALAACKAEGTFKHGEFFTKIGLKGKSAADIKKVFGIIDQDKSDFVEEDELKLFLQNFSAGARALTDAETATFLKAGDSDGDGKIGVDEFAAMVKG</sequence>
<name>PRVB1_MERGA</name>
<reference evidence="8" key="1">
    <citation type="journal article" date="2010" name="J. Proteome Res.">
        <title>Extensive de novo sequencing of new parvalbumin isoforms using a novel combination of bottom-up proteomics, accurate molecular mass measurement by FTICR-MS, and selected MS/MS ion monitoring.</title>
        <authorList>
            <person name="Carrera M."/>
            <person name="Canas B."/>
            <person name="Vazquez J."/>
            <person name="Gallardo J.M."/>
        </authorList>
    </citation>
    <scope>PROTEIN SEQUENCE</scope>
    <scope>MASS SPECTROMETRY</scope>
    <scope>ACETYLATION AT ALA-1</scope>
    <source>
        <tissue evidence="6">Muscle</tissue>
    </source>
</reference>
<dbReference type="SMR" id="P86761"/>
<dbReference type="iPTMnet" id="P86761"/>
<dbReference type="GO" id="GO:0005737">
    <property type="term" value="C:cytoplasm"/>
    <property type="evidence" value="ECO:0007669"/>
    <property type="project" value="TreeGrafter"/>
</dbReference>
<dbReference type="GO" id="GO:0005509">
    <property type="term" value="F:calcium ion binding"/>
    <property type="evidence" value="ECO:0007669"/>
    <property type="project" value="InterPro"/>
</dbReference>
<dbReference type="CDD" id="cd16255">
    <property type="entry name" value="EFh_parvalbumin_beta"/>
    <property type="match status" value="1"/>
</dbReference>
<dbReference type="FunFam" id="1.10.238.10:FF:000060">
    <property type="entry name" value="Parvalbumin, thymic"/>
    <property type="match status" value="1"/>
</dbReference>
<dbReference type="Gene3D" id="1.10.238.10">
    <property type="entry name" value="EF-hand"/>
    <property type="match status" value="1"/>
</dbReference>
<dbReference type="InterPro" id="IPR011992">
    <property type="entry name" value="EF-hand-dom_pair"/>
</dbReference>
<dbReference type="InterPro" id="IPR018247">
    <property type="entry name" value="EF_Hand_1_Ca_BS"/>
</dbReference>
<dbReference type="InterPro" id="IPR002048">
    <property type="entry name" value="EF_hand_dom"/>
</dbReference>
<dbReference type="InterPro" id="IPR008080">
    <property type="entry name" value="Parvalbumin"/>
</dbReference>
<dbReference type="PANTHER" id="PTHR11653:SF12">
    <property type="entry name" value="PARVALBUMIN"/>
    <property type="match status" value="1"/>
</dbReference>
<dbReference type="PANTHER" id="PTHR11653">
    <property type="entry name" value="PARVALBUMIN ALPHA"/>
    <property type="match status" value="1"/>
</dbReference>
<dbReference type="Pfam" id="PF13499">
    <property type="entry name" value="EF-hand_7"/>
    <property type="match status" value="1"/>
</dbReference>
<dbReference type="PRINTS" id="PR01697">
    <property type="entry name" value="PARVALBUMIN"/>
</dbReference>
<dbReference type="SUPFAM" id="SSF47473">
    <property type="entry name" value="EF-hand"/>
    <property type="match status" value="1"/>
</dbReference>
<dbReference type="PROSITE" id="PS00018">
    <property type="entry name" value="EF_HAND_1"/>
    <property type="match status" value="2"/>
</dbReference>
<dbReference type="PROSITE" id="PS50222">
    <property type="entry name" value="EF_HAND_2"/>
    <property type="match status" value="2"/>
</dbReference>
<accession>P86761</accession>
<evidence type="ECO:0000250" key="1">
    <source>
        <dbReference type="UniProtKB" id="P02621"/>
    </source>
</evidence>
<evidence type="ECO:0000250" key="2">
    <source>
        <dbReference type="UniProtKB" id="P02622"/>
    </source>
</evidence>
<evidence type="ECO:0000250" key="3">
    <source>
        <dbReference type="UniProtKB" id="P02624"/>
    </source>
</evidence>
<evidence type="ECO:0000255" key="4"/>
<evidence type="ECO:0000255" key="5">
    <source>
        <dbReference type="PROSITE-ProRule" id="PRU00448"/>
    </source>
</evidence>
<evidence type="ECO:0000269" key="6">
    <source>
    </source>
</evidence>
<evidence type="ECO:0000303" key="7">
    <source>
    </source>
</evidence>
<evidence type="ECO:0000305" key="8"/>
<protein>
    <recommendedName>
        <fullName evidence="7">Parvalbumin beta 1</fullName>
    </recommendedName>
</protein>
<keyword id="KW-0007">Acetylation</keyword>
<keyword id="KW-0020">Allergen</keyword>
<keyword id="KW-0106">Calcium</keyword>
<keyword id="KW-0903">Direct protein sequencing</keyword>
<keyword id="KW-0479">Metal-binding</keyword>
<keyword id="KW-0514">Muscle protein</keyword>
<keyword id="KW-0677">Repeat</keyword>
<feature type="chain" id="PRO_0000399418" description="Parvalbumin beta 1">
    <location>
        <begin position="1"/>
        <end position="108"/>
    </location>
</feature>
<feature type="domain" description="EF-hand 1" evidence="5">
    <location>
        <begin position="38"/>
        <end position="73"/>
    </location>
</feature>
<feature type="domain" description="EF-hand 2" evidence="5">
    <location>
        <begin position="77"/>
        <end position="108"/>
    </location>
</feature>
<feature type="binding site" evidence="1 5">
    <location>
        <position position="51"/>
    </location>
    <ligand>
        <name>Ca(2+)</name>
        <dbReference type="ChEBI" id="CHEBI:29108"/>
        <label>1</label>
    </ligand>
</feature>
<feature type="binding site" evidence="1 5">
    <location>
        <position position="53"/>
    </location>
    <ligand>
        <name>Ca(2+)</name>
        <dbReference type="ChEBI" id="CHEBI:29108"/>
        <label>1</label>
    </ligand>
</feature>
<feature type="binding site" evidence="1 5">
    <location>
        <position position="55"/>
    </location>
    <ligand>
        <name>Ca(2+)</name>
        <dbReference type="ChEBI" id="CHEBI:29108"/>
        <label>1</label>
    </ligand>
</feature>
<feature type="binding site" evidence="1">
    <location>
        <position position="57"/>
    </location>
    <ligand>
        <name>Ca(2+)</name>
        <dbReference type="ChEBI" id="CHEBI:29108"/>
        <label>1</label>
    </ligand>
</feature>
<feature type="binding site" evidence="1">
    <location>
        <position position="59"/>
    </location>
    <ligand>
        <name>Ca(2+)</name>
        <dbReference type="ChEBI" id="CHEBI:29108"/>
        <label>1</label>
    </ligand>
</feature>
<feature type="binding site" evidence="1 5">
    <location>
        <position position="62"/>
    </location>
    <ligand>
        <name>Ca(2+)</name>
        <dbReference type="ChEBI" id="CHEBI:29108"/>
        <label>1</label>
    </ligand>
</feature>
<feature type="binding site" evidence="1 5">
    <location>
        <position position="90"/>
    </location>
    <ligand>
        <name>Ca(2+)</name>
        <dbReference type="ChEBI" id="CHEBI:29108"/>
        <label>2</label>
    </ligand>
</feature>
<feature type="binding site" evidence="1 5">
    <location>
        <position position="92"/>
    </location>
    <ligand>
        <name>Ca(2+)</name>
        <dbReference type="ChEBI" id="CHEBI:29108"/>
        <label>2</label>
    </ligand>
</feature>
<feature type="binding site" evidence="1 5">
    <location>
        <position position="94"/>
    </location>
    <ligand>
        <name>Ca(2+)</name>
        <dbReference type="ChEBI" id="CHEBI:29108"/>
        <label>2</label>
    </ligand>
</feature>
<feature type="binding site" evidence="5">
    <location>
        <position position="96"/>
    </location>
    <ligand>
        <name>Ca(2+)</name>
        <dbReference type="ChEBI" id="CHEBI:29108"/>
        <label>2</label>
    </ligand>
</feature>
<feature type="binding site" evidence="1 5">
    <location>
        <position position="101"/>
    </location>
    <ligand>
        <name>Ca(2+)</name>
        <dbReference type="ChEBI" id="CHEBI:29108"/>
        <label>2</label>
    </ligand>
</feature>
<feature type="modified residue" description="N-acetylalanine" evidence="6">
    <location>
        <position position="1"/>
    </location>
</feature>
<feature type="unsure residue" description="I or L" evidence="6">
    <location>
        <position position="5"/>
    </location>
</feature>
<feature type="unsure residue" description="L or I" evidence="6">
    <location>
        <position position="6"/>
    </location>
</feature>
<feature type="unsure residue" description="I or L" evidence="6">
    <location>
        <position position="11"/>
    </location>
</feature>
<feature type="unsure residue" description="L or I" evidence="6">
    <location>
        <position position="15"/>
    </location>
</feature>
<feature type="unsure residue" description="K or Q" evidence="6">
    <location>
        <position position="19"/>
    </location>
</feature>
<feature type="unsure residue" description="K or Q" evidence="6">
    <location>
        <position position="25"/>
    </location>
</feature>
<feature type="unsure residue" description="K or Q" evidence="6">
    <location>
        <position position="32"/>
    </location>
</feature>
<feature type="unsure residue" description="I or L" evidence="6">
    <location>
        <position position="33"/>
    </location>
</feature>
<feature type="unsure residue" description="L or I" evidence="6">
    <location>
        <position position="35"/>
    </location>
</feature>
<feature type="unsure residue" description="K or Q" evidence="6">
    <location>
        <position position="36"/>
    </location>
</feature>
<feature type="unsure residue" description="K or Q" evidence="6">
    <location>
        <position position="38"/>
    </location>
</feature>
<feature type="unsure residue" description="I or L" evidence="6">
    <location>
        <position position="43"/>
    </location>
</feature>
<feature type="unsure residue" description="K or Q" evidence="6">
    <location>
        <position position="44"/>
    </location>
</feature>
<feature type="unsure residue" description="K or Q" evidence="6">
    <location>
        <position position="45"/>
    </location>
</feature>
<feature type="unsure residue" description="I or L" evidence="6">
    <location>
        <position position="49"/>
    </location>
</feature>
<feature type="unsure residue" description="I or L" evidence="6">
    <location>
        <position position="50"/>
    </location>
</feature>
<feature type="unsure residue" description="Q or K" evidence="6">
    <location>
        <position position="52"/>
    </location>
</feature>
<feature type="unsure residue" description="K or Q" evidence="6">
    <location>
        <position position="54"/>
    </location>
</feature>
<feature type="unsure residue" description="L or I" evidence="6">
    <location>
        <position position="63"/>
    </location>
</feature>
<feature type="unsure residue" description="K or Q" evidence="6">
    <location>
        <position position="64"/>
    </location>
</feature>
<feature type="unsure residue" description="L or I" evidence="6">
    <location>
        <position position="65"/>
    </location>
</feature>
<feature type="unsure residue" description="L or I" evidence="6">
    <location>
        <position position="67"/>
    </location>
</feature>
<feature type="unsure residue" description="Q or K" evidence="6">
    <location>
        <position position="68"/>
    </location>
</feature>
<feature type="unsure residue" description="L or I" evidence="6">
    <location>
        <position position="77"/>
    </location>
</feature>
<feature type="unsure residue" description="L or I" evidence="6">
    <location>
        <position position="86"/>
    </location>
</feature>
<feature type="unsure residue" description="K or Q" evidence="6">
    <location>
        <position position="87"/>
    </location>
</feature>
<feature type="unsure residue" description="K or Q" evidence="6">
    <location>
        <position position="96"/>
    </location>
</feature>
<feature type="unsure residue" description="I or L" evidence="6">
    <location>
        <position position="97"/>
    </location>
</feature>
<feature type="unsure residue" description="K or Q" evidence="6">
    <location>
        <position position="107"/>
    </location>
</feature>
<proteinExistence type="evidence at protein level"/>
<comment type="function">
    <text evidence="2 3">In muscle, parvalbumin is thought to be involved in relaxation after contraction. It binds two calcium ions (By similarity).</text>
</comment>
<comment type="mass spectrometry"/>
<comment type="miscellaneous">
    <text evidence="2 6">Is regarded as an important allergen.</text>
</comment>
<comment type="miscellaneous">
    <text evidence="6">On the 2D-gel the determined pI of this protein is: 4.56, its MW is: 11.30 kDa.</text>
</comment>
<comment type="similarity">
    <text evidence="4">Belongs to the parvalbumin family.</text>
</comment>
<organism>
    <name type="scientific">Merluccius gayi</name>
    <name type="common">South Pacific hake</name>
    <name type="synonym">Merluccius gayi peruanus</name>
    <dbReference type="NCBI Taxonomy" id="89948"/>
    <lineage>
        <taxon>Eukaryota</taxon>
        <taxon>Metazoa</taxon>
        <taxon>Chordata</taxon>
        <taxon>Craniata</taxon>
        <taxon>Vertebrata</taxon>
        <taxon>Euteleostomi</taxon>
        <taxon>Actinopterygii</taxon>
        <taxon>Neopterygii</taxon>
        <taxon>Teleostei</taxon>
        <taxon>Neoteleostei</taxon>
        <taxon>Acanthomorphata</taxon>
        <taxon>Zeiogadaria</taxon>
        <taxon>Gadariae</taxon>
        <taxon>Gadiformes</taxon>
        <taxon>Gadoidei</taxon>
        <taxon>Merlucciidae</taxon>
        <taxon>Merluccius</taxon>
    </lineage>
</organism>